<gene>
    <name evidence="1" type="primary">clpP</name>
    <name type="ordered locus">SAG1585</name>
</gene>
<feature type="chain" id="PRO_0000179658" description="ATP-dependent Clp protease proteolytic subunit">
    <location>
        <begin position="1"/>
        <end position="196"/>
    </location>
</feature>
<feature type="active site" description="Nucleophile" evidence="1">
    <location>
        <position position="96"/>
    </location>
</feature>
<feature type="active site" evidence="1">
    <location>
        <position position="121"/>
    </location>
</feature>
<organism>
    <name type="scientific">Streptococcus agalactiae serotype V (strain ATCC BAA-611 / 2603 V/R)</name>
    <dbReference type="NCBI Taxonomy" id="208435"/>
    <lineage>
        <taxon>Bacteria</taxon>
        <taxon>Bacillati</taxon>
        <taxon>Bacillota</taxon>
        <taxon>Bacilli</taxon>
        <taxon>Lactobacillales</taxon>
        <taxon>Streptococcaceae</taxon>
        <taxon>Streptococcus</taxon>
    </lineage>
</organism>
<dbReference type="EC" id="3.4.21.92" evidence="1"/>
<dbReference type="EMBL" id="AE009948">
    <property type="protein sequence ID" value="AAN00449.1"/>
    <property type="molecule type" value="Genomic_DNA"/>
</dbReference>
<dbReference type="RefSeq" id="NP_688576.1">
    <property type="nucleotide sequence ID" value="NC_004116.1"/>
</dbReference>
<dbReference type="RefSeq" id="WP_000613483.1">
    <property type="nucleotide sequence ID" value="NC_004116.1"/>
</dbReference>
<dbReference type="SMR" id="Q8DYA5"/>
<dbReference type="STRING" id="208435.SAG1585"/>
<dbReference type="MEROPS" id="S14.001"/>
<dbReference type="KEGG" id="sag:SAG1585"/>
<dbReference type="PATRIC" id="fig|208435.3.peg.1595"/>
<dbReference type="HOGENOM" id="CLU_058707_3_2_9"/>
<dbReference type="OrthoDB" id="9802800at2"/>
<dbReference type="Proteomes" id="UP000000821">
    <property type="component" value="Chromosome"/>
</dbReference>
<dbReference type="GO" id="GO:0005737">
    <property type="term" value="C:cytoplasm"/>
    <property type="evidence" value="ECO:0007669"/>
    <property type="project" value="UniProtKB-SubCell"/>
</dbReference>
<dbReference type="GO" id="GO:0009368">
    <property type="term" value="C:endopeptidase Clp complex"/>
    <property type="evidence" value="ECO:0007669"/>
    <property type="project" value="TreeGrafter"/>
</dbReference>
<dbReference type="GO" id="GO:0004176">
    <property type="term" value="F:ATP-dependent peptidase activity"/>
    <property type="evidence" value="ECO:0007669"/>
    <property type="project" value="InterPro"/>
</dbReference>
<dbReference type="GO" id="GO:0051117">
    <property type="term" value="F:ATPase binding"/>
    <property type="evidence" value="ECO:0007669"/>
    <property type="project" value="TreeGrafter"/>
</dbReference>
<dbReference type="GO" id="GO:0004252">
    <property type="term" value="F:serine-type endopeptidase activity"/>
    <property type="evidence" value="ECO:0007669"/>
    <property type="project" value="UniProtKB-UniRule"/>
</dbReference>
<dbReference type="GO" id="GO:0006515">
    <property type="term" value="P:protein quality control for misfolded or incompletely synthesized proteins"/>
    <property type="evidence" value="ECO:0007669"/>
    <property type="project" value="TreeGrafter"/>
</dbReference>
<dbReference type="CDD" id="cd07017">
    <property type="entry name" value="S14_ClpP_2"/>
    <property type="match status" value="1"/>
</dbReference>
<dbReference type="FunFam" id="3.90.226.10:FF:000014">
    <property type="entry name" value="ATP-dependent Clp protease proteolytic subunit"/>
    <property type="match status" value="1"/>
</dbReference>
<dbReference type="Gene3D" id="3.90.226.10">
    <property type="entry name" value="2-enoyl-CoA Hydratase, Chain A, domain 1"/>
    <property type="match status" value="1"/>
</dbReference>
<dbReference type="HAMAP" id="MF_00444">
    <property type="entry name" value="ClpP"/>
    <property type="match status" value="1"/>
</dbReference>
<dbReference type="InterPro" id="IPR001907">
    <property type="entry name" value="ClpP"/>
</dbReference>
<dbReference type="InterPro" id="IPR029045">
    <property type="entry name" value="ClpP/crotonase-like_dom_sf"/>
</dbReference>
<dbReference type="InterPro" id="IPR023562">
    <property type="entry name" value="ClpP/TepA"/>
</dbReference>
<dbReference type="InterPro" id="IPR033135">
    <property type="entry name" value="ClpP_His_AS"/>
</dbReference>
<dbReference type="InterPro" id="IPR018215">
    <property type="entry name" value="ClpP_Ser_AS"/>
</dbReference>
<dbReference type="NCBIfam" id="NF001368">
    <property type="entry name" value="PRK00277.1"/>
    <property type="match status" value="1"/>
</dbReference>
<dbReference type="NCBIfam" id="NF009205">
    <property type="entry name" value="PRK12553.1"/>
    <property type="match status" value="1"/>
</dbReference>
<dbReference type="PANTHER" id="PTHR10381">
    <property type="entry name" value="ATP-DEPENDENT CLP PROTEASE PROTEOLYTIC SUBUNIT"/>
    <property type="match status" value="1"/>
</dbReference>
<dbReference type="PANTHER" id="PTHR10381:SF70">
    <property type="entry name" value="ATP-DEPENDENT CLP PROTEASE PROTEOLYTIC SUBUNIT"/>
    <property type="match status" value="1"/>
</dbReference>
<dbReference type="Pfam" id="PF00574">
    <property type="entry name" value="CLP_protease"/>
    <property type="match status" value="1"/>
</dbReference>
<dbReference type="PRINTS" id="PR00127">
    <property type="entry name" value="CLPPROTEASEP"/>
</dbReference>
<dbReference type="SUPFAM" id="SSF52096">
    <property type="entry name" value="ClpP/crotonase"/>
    <property type="match status" value="1"/>
</dbReference>
<dbReference type="PROSITE" id="PS00382">
    <property type="entry name" value="CLP_PROTEASE_HIS"/>
    <property type="match status" value="1"/>
</dbReference>
<dbReference type="PROSITE" id="PS00381">
    <property type="entry name" value="CLP_PROTEASE_SER"/>
    <property type="match status" value="1"/>
</dbReference>
<keyword id="KW-0963">Cytoplasm</keyword>
<keyword id="KW-0378">Hydrolase</keyword>
<keyword id="KW-0645">Protease</keyword>
<keyword id="KW-1185">Reference proteome</keyword>
<keyword id="KW-0720">Serine protease</keyword>
<comment type="function">
    <text evidence="1">Cleaves peptides in various proteins in a process that requires ATP hydrolysis. Has a chymotrypsin-like activity. Plays a major role in the degradation of misfolded proteins.</text>
</comment>
<comment type="catalytic activity">
    <reaction evidence="1">
        <text>Hydrolysis of proteins to small peptides in the presence of ATP and magnesium. alpha-casein is the usual test substrate. In the absence of ATP, only oligopeptides shorter than five residues are hydrolyzed (such as succinyl-Leu-Tyr-|-NHMec, and Leu-Tyr-Leu-|-Tyr-Trp, in which cleavage of the -Tyr-|-Leu- and -Tyr-|-Trp bonds also occurs).</text>
        <dbReference type="EC" id="3.4.21.92"/>
    </reaction>
</comment>
<comment type="subunit">
    <text evidence="1">Fourteen ClpP subunits assemble into 2 heptameric rings which stack back to back to give a disk-like structure with a central cavity, resembling the structure of eukaryotic proteasomes.</text>
</comment>
<comment type="subcellular location">
    <subcellularLocation>
        <location evidence="1">Cytoplasm</location>
    </subcellularLocation>
</comment>
<comment type="similarity">
    <text evidence="1">Belongs to the peptidase S14 family.</text>
</comment>
<protein>
    <recommendedName>
        <fullName evidence="1">ATP-dependent Clp protease proteolytic subunit</fullName>
        <ecNumber evidence="1">3.4.21.92</ecNumber>
    </recommendedName>
    <alternativeName>
        <fullName evidence="1">Endopeptidase Clp</fullName>
    </alternativeName>
</protein>
<accession>Q8DYA5</accession>
<sequence>MIPVVIEQTSRGERSYDIYSRLLKDRIIMLTGQVEDNMANSIIAQLLFLDAQDNTKDIYLYVNTPGGSVSAGLAIVDTMNFIKSDVQTIVMGMAASMGTIIASSGAKGKRFMLPNAEYMIHQPMGGTGGGTQQSDMAIAAEHLLKTRHTLEKILADNSGQSIEKVHDDAERDRWMSAQETLDYGFIDAIMENNNLQ</sequence>
<name>CLPP_STRA5</name>
<reference key="1">
    <citation type="journal article" date="2002" name="Proc. Natl. Acad. Sci. U.S.A.">
        <title>Complete genome sequence and comparative genomic analysis of an emerging human pathogen, serotype V Streptococcus agalactiae.</title>
        <authorList>
            <person name="Tettelin H."/>
            <person name="Masignani V."/>
            <person name="Cieslewicz M.J."/>
            <person name="Eisen J.A."/>
            <person name="Peterson S.N."/>
            <person name="Wessels M.R."/>
            <person name="Paulsen I.T."/>
            <person name="Nelson K.E."/>
            <person name="Margarit I."/>
            <person name="Read T.D."/>
            <person name="Madoff L.C."/>
            <person name="Wolf A.M."/>
            <person name="Beanan M.J."/>
            <person name="Brinkac L.M."/>
            <person name="Daugherty S.C."/>
            <person name="DeBoy R.T."/>
            <person name="Durkin A.S."/>
            <person name="Kolonay J.F."/>
            <person name="Madupu R."/>
            <person name="Lewis M.R."/>
            <person name="Radune D."/>
            <person name="Fedorova N.B."/>
            <person name="Scanlan D."/>
            <person name="Khouri H.M."/>
            <person name="Mulligan S."/>
            <person name="Carty H.A."/>
            <person name="Cline R.T."/>
            <person name="Van Aken S.E."/>
            <person name="Gill J."/>
            <person name="Scarselli M."/>
            <person name="Mora M."/>
            <person name="Iacobini E.T."/>
            <person name="Brettoni C."/>
            <person name="Galli G."/>
            <person name="Mariani M."/>
            <person name="Vegni F."/>
            <person name="Maione D."/>
            <person name="Rinaudo D."/>
            <person name="Rappuoli R."/>
            <person name="Telford J.L."/>
            <person name="Kasper D.L."/>
            <person name="Grandi G."/>
            <person name="Fraser C.M."/>
        </authorList>
    </citation>
    <scope>NUCLEOTIDE SEQUENCE [LARGE SCALE GENOMIC DNA]</scope>
    <source>
        <strain>ATCC BAA-611 / 2603 V/R</strain>
    </source>
</reference>
<evidence type="ECO:0000255" key="1">
    <source>
        <dbReference type="HAMAP-Rule" id="MF_00444"/>
    </source>
</evidence>
<proteinExistence type="inferred from homology"/>